<gene>
    <name type="primary">dtpT</name>
</gene>
<dbReference type="EMBL" id="U05215">
    <property type="protein sequence ID" value="AAA20660.1"/>
    <property type="status" value="ALT_INIT"/>
    <property type="molecule type" value="Genomic_DNA"/>
</dbReference>
<dbReference type="RefSeq" id="WP_011835629.1">
    <property type="nucleotide sequence ID" value="NZ_WJUW01000030.1"/>
</dbReference>
<dbReference type="SMR" id="P0C2U3"/>
<dbReference type="OMA" id="QMMGVWF"/>
<dbReference type="GO" id="GO:0005886">
    <property type="term" value="C:plasma membrane"/>
    <property type="evidence" value="ECO:0007669"/>
    <property type="project" value="UniProtKB-SubCell"/>
</dbReference>
<dbReference type="GO" id="GO:1904680">
    <property type="term" value="F:peptide transmembrane transporter activity"/>
    <property type="evidence" value="ECO:0007669"/>
    <property type="project" value="InterPro"/>
</dbReference>
<dbReference type="GO" id="GO:0006857">
    <property type="term" value="P:oligopeptide transport"/>
    <property type="evidence" value="ECO:0007669"/>
    <property type="project" value="InterPro"/>
</dbReference>
<dbReference type="GO" id="GO:0015031">
    <property type="term" value="P:protein transport"/>
    <property type="evidence" value="ECO:0007669"/>
    <property type="project" value="UniProtKB-KW"/>
</dbReference>
<dbReference type="CDD" id="cd17346">
    <property type="entry name" value="MFS_DtpA_like"/>
    <property type="match status" value="1"/>
</dbReference>
<dbReference type="FunFam" id="1.20.1250.20:FF:000017">
    <property type="entry name" value="Dipeptide and tripeptide permease A"/>
    <property type="match status" value="1"/>
</dbReference>
<dbReference type="Gene3D" id="1.20.1250.20">
    <property type="entry name" value="MFS general substrate transporter like domains"/>
    <property type="match status" value="1"/>
</dbReference>
<dbReference type="InterPro" id="IPR005279">
    <property type="entry name" value="Dipep/tripep_permease"/>
</dbReference>
<dbReference type="InterPro" id="IPR020846">
    <property type="entry name" value="MFS_dom"/>
</dbReference>
<dbReference type="InterPro" id="IPR036259">
    <property type="entry name" value="MFS_trans_sf"/>
</dbReference>
<dbReference type="InterPro" id="IPR050171">
    <property type="entry name" value="MFS_Transporters"/>
</dbReference>
<dbReference type="InterPro" id="IPR000109">
    <property type="entry name" value="POT_fam"/>
</dbReference>
<dbReference type="InterPro" id="IPR018456">
    <property type="entry name" value="PTR2_symporter_CS"/>
</dbReference>
<dbReference type="NCBIfam" id="TIGR00924">
    <property type="entry name" value="yjdL_sub1_fam"/>
    <property type="match status" value="1"/>
</dbReference>
<dbReference type="PANTHER" id="PTHR23517:SF15">
    <property type="entry name" value="PROTON-DEPENDENT OLIGOPEPTIDE FAMILY TRANSPORT PROTEIN"/>
    <property type="match status" value="1"/>
</dbReference>
<dbReference type="PANTHER" id="PTHR23517">
    <property type="entry name" value="RESISTANCE PROTEIN MDTM, PUTATIVE-RELATED-RELATED"/>
    <property type="match status" value="1"/>
</dbReference>
<dbReference type="Pfam" id="PF00854">
    <property type="entry name" value="PTR2"/>
    <property type="match status" value="1"/>
</dbReference>
<dbReference type="SUPFAM" id="SSF103473">
    <property type="entry name" value="MFS general substrate transporter"/>
    <property type="match status" value="2"/>
</dbReference>
<dbReference type="PROSITE" id="PS50850">
    <property type="entry name" value="MFS"/>
    <property type="match status" value="1"/>
</dbReference>
<dbReference type="PROSITE" id="PS01022">
    <property type="entry name" value="PTR2_1"/>
    <property type="match status" value="1"/>
</dbReference>
<dbReference type="PROSITE" id="PS01023">
    <property type="entry name" value="PTR2_2"/>
    <property type="match status" value="1"/>
</dbReference>
<comment type="function">
    <text>Proton-dependent uptake of di- or tri-peptides.</text>
</comment>
<comment type="subcellular location">
    <subcellularLocation>
        <location>Cell membrane</location>
        <topology>Multi-pass membrane protein</topology>
    </subcellularLocation>
</comment>
<comment type="similarity">
    <text evidence="1">Belongs to the major facilitator superfamily. Proton-dependent oligopeptide transporter (POT/PTR) (TC 2.A.17) family.</text>
</comment>
<comment type="sequence caution" evidence="1">
    <conflict type="erroneous initiation">
        <sequence resource="EMBL-CDS" id="AAA20660"/>
    </conflict>
</comment>
<reference key="1">
    <citation type="journal article" date="1994" name="J. Biol. Chem.">
        <title>The di- and tripeptide transport protein of Lactococcus lactis. A new type of bacterial peptide transporter.</title>
        <authorList>
            <person name="Hagting A."/>
            <person name="Kunji E.R.S."/>
            <person name="Leenhouts K.J."/>
            <person name="Poolman B."/>
            <person name="Konings W.N."/>
        </authorList>
    </citation>
    <scope>NUCLEOTIDE SEQUENCE [GENOMIC DNA]</scope>
    <source>
        <strain>NCDO 763 / ML3</strain>
    </source>
</reference>
<reference key="2">
    <citation type="journal article" date="1997" name="Biochemistry">
        <title>Membrane topology of the di- and tripeptide transport protein of Lactococcus lactis.</title>
        <authorList>
            <person name="Hagting A."/>
            <person name="van de Velde J."/>
            <person name="Poolman B."/>
            <person name="Konings W.N."/>
        </authorList>
    </citation>
    <scope>TOPOLOGY</scope>
</reference>
<feature type="chain" id="PRO_0000285243" description="Di-/tripeptide transporter">
    <location>
        <begin position="1"/>
        <end position="497"/>
    </location>
</feature>
<feature type="topological domain" description="Cytoplasmic" evidence="2">
    <location>
        <begin position="1"/>
        <end position="36"/>
    </location>
</feature>
<feature type="transmembrane region" description="Helical" evidence="1">
    <location>
        <begin position="37"/>
        <end position="55"/>
    </location>
</feature>
<feature type="topological domain" description="Extracellular" evidence="2">
    <location>
        <begin position="56"/>
        <end position="64"/>
    </location>
</feature>
<feature type="transmembrane region" description="Helical" evidence="1">
    <location>
        <begin position="65"/>
        <end position="83"/>
    </location>
</feature>
<feature type="topological domain" description="Cytoplasmic" evidence="2">
    <location>
        <begin position="84"/>
        <end position="92"/>
    </location>
</feature>
<feature type="transmembrane region" description="Helical" evidence="1">
    <location>
        <begin position="93"/>
        <end position="111"/>
    </location>
</feature>
<feature type="topological domain" description="Extracellular" evidence="2">
    <location>
        <begin position="112"/>
        <end position="115"/>
    </location>
</feature>
<feature type="transmembrane region" description="Helical" evidence="1">
    <location>
        <begin position="116"/>
        <end position="134"/>
    </location>
</feature>
<feature type="topological domain" description="Cytoplasmic" evidence="2">
    <location>
        <begin position="135"/>
        <end position="154"/>
    </location>
</feature>
<feature type="transmembrane region" description="Helical" evidence="1">
    <location>
        <begin position="155"/>
        <end position="173"/>
    </location>
</feature>
<feature type="topological domain" description="Extracellular" evidence="2">
    <location>
        <begin position="174"/>
        <end position="181"/>
    </location>
</feature>
<feature type="transmembrane region" description="Helical" evidence="1">
    <location>
        <begin position="182"/>
        <end position="200"/>
    </location>
</feature>
<feature type="topological domain" description="Cytoplasmic" evidence="2">
    <location>
        <begin position="201"/>
        <end position="224"/>
    </location>
</feature>
<feature type="transmembrane region" description="Helical" evidence="1">
    <location>
        <begin position="225"/>
        <end position="243"/>
    </location>
</feature>
<feature type="topological domain" description="Extracellular" evidence="2">
    <location>
        <begin position="244"/>
        <end position="254"/>
    </location>
</feature>
<feature type="transmembrane region" description="Helical" evidence="1">
    <location>
        <begin position="255"/>
        <end position="273"/>
    </location>
</feature>
<feature type="topological domain" description="Cytoplasmic" evidence="2">
    <location>
        <begin position="274"/>
        <end position="293"/>
    </location>
</feature>
<feature type="transmembrane region" description="Helical" evidence="1">
    <location>
        <begin position="294"/>
        <end position="312"/>
    </location>
</feature>
<feature type="topological domain" description="Extracellular" evidence="2">
    <location>
        <begin position="313"/>
        <end position="335"/>
    </location>
</feature>
<feature type="transmembrane region" description="Helical" evidence="1">
    <location>
        <begin position="336"/>
        <end position="354"/>
    </location>
</feature>
<feature type="topological domain" description="Cytoplasmic" evidence="2">
    <location>
        <begin position="355"/>
        <end position="372"/>
    </location>
</feature>
<feature type="transmembrane region" description="Helical" evidence="1">
    <location>
        <begin position="373"/>
        <end position="391"/>
    </location>
</feature>
<feature type="topological domain" description="Extracellular" evidence="2">
    <location>
        <begin position="392"/>
        <end position="425"/>
    </location>
</feature>
<feature type="transmembrane region" description="Helical" evidence="1">
    <location>
        <begin position="426"/>
        <end position="444"/>
    </location>
</feature>
<feature type="topological domain" description="Cytoplasmic" evidence="2">
    <location>
        <begin position="445"/>
        <end position="497"/>
    </location>
</feature>
<sequence length="497" mass="54791">MQNLNKTEKTFFGQPRGLLTLFQTEFWERFSYYGMRAILVYYLYALTTADNAGLGLPKAQAMAIVSIYGALVYLSTIVGGWVADRLLGASRTIFLGGILITLGHVALATPFGLSSLFVALFLIILGTGMLKPNISNMVGHLYSKDDSRRDTGFNIFVVGINMGSLIAPLIVGTVGQGVNYHLGFSLAAIGMIFALFAYWYGRLRHFPEIGREPSNPMDAKAKRNFIITLTIVLIVALIGFFLIYQASPANFINNFINVLSIIGIVVPIIYFVMMFTSKKVESDERRKLTAYIPLFLSAIVFWAIEEQSSTIIAVWGESRSNLNPTWFGFTFHIDPSWYQLLNPLFIVLLSPIFVRIWNKLGDRQPSTIVKFGLGLMLTGASYLIMTLPGLLNGTSGRASALWLVLMFAVQMAGELLVSPVGLSVSTKLAPVAFQSQMMAMWFLADSTSQAINAQITPIFKAATEVHFFAITGIIGIIVGIILLIIKKPILKLMGDVR</sequence>
<keyword id="KW-1003">Cell membrane</keyword>
<keyword id="KW-0472">Membrane</keyword>
<keyword id="KW-0571">Peptide transport</keyword>
<keyword id="KW-0653">Protein transport</keyword>
<keyword id="KW-0812">Transmembrane</keyword>
<keyword id="KW-1133">Transmembrane helix</keyword>
<keyword id="KW-0813">Transport</keyword>
<protein>
    <recommendedName>
        <fullName>Di-/tripeptide transporter</fullName>
    </recommendedName>
</protein>
<evidence type="ECO:0000305" key="1"/>
<evidence type="ECO:0000305" key="2">
    <source>
    </source>
</evidence>
<accession>P0C2U3</accession>
<accession>P36574</accession>
<accession>Q9CHM6</accession>
<organism>
    <name type="scientific">Lactococcus lactis subsp. cremoris</name>
    <name type="common">Streptococcus cremoris</name>
    <dbReference type="NCBI Taxonomy" id="1359"/>
    <lineage>
        <taxon>Bacteria</taxon>
        <taxon>Bacillati</taxon>
        <taxon>Bacillota</taxon>
        <taxon>Bacilli</taxon>
        <taxon>Lactobacillales</taxon>
        <taxon>Streptococcaceae</taxon>
        <taxon>Lactococcus</taxon>
    </lineage>
</organism>
<name>DTPT_LACLC</name>
<proteinExistence type="evidence at protein level"/>